<protein>
    <recommendedName>
        <fullName evidence="1">Undecaprenyl phosphate-alpha-4-amino-4-deoxy-L-arabinose arabinosyl transferase</fullName>
        <ecNumber evidence="1">2.4.2.43</ecNumber>
    </recommendedName>
    <alternativeName>
        <fullName evidence="1">4-amino-4-deoxy-L-arabinose lipid A transferase</fullName>
    </alternativeName>
    <alternativeName>
        <fullName evidence="1">Lipid IV(A) 4-amino-4-deoxy-L-arabinosyltransferase</fullName>
    </alternativeName>
    <alternativeName>
        <fullName evidence="1">Undecaprenyl phosphate-alpha-L-Ara4N transferase</fullName>
    </alternativeName>
</protein>
<sequence length="547" mass="61206">MKLTKWALPLFFLLFYLLPLDQRPLWSPDENRYAEISREMVSTGDWVVPHFLGLRYFEKPIAGYWFNSISQQLFGDTNFAVRFASAAATGLSALLIVWFALQLWQCRRKAFLAGLIYLSLLIVYGIGTYSVLDAMVTLWLNAAMVSFYLIRQEGPLRTRVAGYLLFGLACGMGFLTKGFIALAVPVIVIVPYVIYQRRLPELLRFGPLAMVSAALLAAPWAIAVHLREPDYWHYFFWVEHIQRFAADNAQHKAPFWYYLPMGLLGTLPWLGLLPGALRKGWQDRKISPETLYLLAWVVLPLLFFSVAKGKLLTYILPCFAPLAMLLAASAVDLLKEGKERAFRVNAWLNGLFGLICLAVLAVLALSPSHAVYGEEDHGALAVAMVIFAGWALLGFIQLKDVSRRWTLSALCPMVLAVGLPWALPQSLIDSKLPERFIEANQTVLMDSSSLLANDVGLASSLAWGTRRSEIQLFDSKGEVHYGLSYPDAKERYVTRSDFPAWLAEARKNGQVALLLKTDKDGSTGSLPPADETIVSHRLTLLVYHGAR</sequence>
<feature type="chain" id="PRO_0000379993" description="Undecaprenyl phosphate-alpha-4-amino-4-deoxy-L-arabinose arabinosyl transferase">
    <location>
        <begin position="1"/>
        <end position="547"/>
    </location>
</feature>
<feature type="transmembrane region" description="Helical" evidence="1">
    <location>
        <begin position="1"/>
        <end position="21"/>
    </location>
</feature>
<feature type="transmembrane region" description="Helical" evidence="1">
    <location>
        <begin position="83"/>
        <end position="103"/>
    </location>
</feature>
<feature type="transmembrane region" description="Helical" evidence="1">
    <location>
        <begin position="111"/>
        <end position="131"/>
    </location>
</feature>
<feature type="transmembrane region" description="Helical" evidence="1">
    <location>
        <begin position="174"/>
        <end position="194"/>
    </location>
</feature>
<feature type="transmembrane region" description="Helical" evidence="1">
    <location>
        <begin position="205"/>
        <end position="225"/>
    </location>
</feature>
<feature type="transmembrane region" description="Helical" evidence="1">
    <location>
        <begin position="253"/>
        <end position="273"/>
    </location>
</feature>
<feature type="transmembrane region" description="Helical" evidence="1">
    <location>
        <begin position="286"/>
        <end position="306"/>
    </location>
</feature>
<feature type="transmembrane region" description="Helical" evidence="1">
    <location>
        <begin position="311"/>
        <end position="331"/>
    </location>
</feature>
<feature type="transmembrane region" description="Helical" evidence="1">
    <location>
        <begin position="346"/>
        <end position="366"/>
    </location>
</feature>
<feature type="transmembrane region" description="Helical" evidence="1">
    <location>
        <begin position="378"/>
        <end position="398"/>
    </location>
</feature>
<feature type="transmembrane region" description="Helical" evidence="1">
    <location>
        <begin position="408"/>
        <end position="428"/>
    </location>
</feature>
<gene>
    <name evidence="1" type="primary">arnT</name>
    <name type="ordered locus">ASA_3311</name>
</gene>
<name>ARNT_AERS4</name>
<organism>
    <name type="scientific">Aeromonas salmonicida (strain A449)</name>
    <dbReference type="NCBI Taxonomy" id="382245"/>
    <lineage>
        <taxon>Bacteria</taxon>
        <taxon>Pseudomonadati</taxon>
        <taxon>Pseudomonadota</taxon>
        <taxon>Gammaproteobacteria</taxon>
        <taxon>Aeromonadales</taxon>
        <taxon>Aeromonadaceae</taxon>
        <taxon>Aeromonas</taxon>
    </lineage>
</organism>
<proteinExistence type="inferred from homology"/>
<keyword id="KW-0997">Cell inner membrane</keyword>
<keyword id="KW-1003">Cell membrane</keyword>
<keyword id="KW-0328">Glycosyltransferase</keyword>
<keyword id="KW-0441">Lipid A biosynthesis</keyword>
<keyword id="KW-0444">Lipid biosynthesis</keyword>
<keyword id="KW-0443">Lipid metabolism</keyword>
<keyword id="KW-0448">Lipopolysaccharide biosynthesis</keyword>
<keyword id="KW-0472">Membrane</keyword>
<keyword id="KW-0808">Transferase</keyword>
<keyword id="KW-0812">Transmembrane</keyword>
<keyword id="KW-1133">Transmembrane helix</keyword>
<comment type="function">
    <text evidence="1">Catalyzes the transfer of the L-Ara4N moiety of the glycolipid undecaprenyl phosphate-alpha-L-Ara4N to lipid A. The modified arabinose is attached to lipid A and is required for resistance to polymyxin and cationic antimicrobial peptides.</text>
</comment>
<comment type="catalytic activity">
    <reaction evidence="1">
        <text>4-amino-4-deoxy-alpha-L-arabinopyranosyl di-trans,octa-cis-undecaprenyl phosphate + lipid IVA = lipid IIA + di-trans,octa-cis-undecaprenyl phosphate.</text>
        <dbReference type="EC" id="2.4.2.43"/>
    </reaction>
</comment>
<comment type="pathway">
    <text evidence="1">Lipopolysaccharide metabolism; 4-amino-4-deoxy-beta-L-arabinose-lipid A biosynthesis.</text>
</comment>
<comment type="subcellular location">
    <subcellularLocation>
        <location evidence="1">Cell inner membrane</location>
        <topology evidence="1">Multi-pass membrane protein</topology>
    </subcellularLocation>
</comment>
<comment type="similarity">
    <text evidence="1">Belongs to the glycosyltransferase 83 family.</text>
</comment>
<dbReference type="EC" id="2.4.2.43" evidence="1"/>
<dbReference type="EMBL" id="CP000644">
    <property type="protein sequence ID" value="ABO91293.1"/>
    <property type="molecule type" value="Genomic_DNA"/>
</dbReference>
<dbReference type="RefSeq" id="WP_005311776.1">
    <property type="nucleotide sequence ID" value="NC_009348.1"/>
</dbReference>
<dbReference type="SMR" id="A4SQX1"/>
<dbReference type="STRING" id="29491.GCA_000820065_03698"/>
<dbReference type="CAZy" id="GT83">
    <property type="family name" value="Glycosyltransferase Family 83"/>
</dbReference>
<dbReference type="KEGG" id="asa:ASA_3311"/>
<dbReference type="PATRIC" id="fig|382245.13.peg.3293"/>
<dbReference type="eggNOG" id="COG1807">
    <property type="taxonomic scope" value="Bacteria"/>
</dbReference>
<dbReference type="HOGENOM" id="CLU_019200_2_1_6"/>
<dbReference type="UniPathway" id="UPA00037"/>
<dbReference type="Proteomes" id="UP000000225">
    <property type="component" value="Chromosome"/>
</dbReference>
<dbReference type="GO" id="GO:0005886">
    <property type="term" value="C:plasma membrane"/>
    <property type="evidence" value="ECO:0007669"/>
    <property type="project" value="UniProtKB-SubCell"/>
</dbReference>
<dbReference type="GO" id="GO:0103015">
    <property type="term" value="F:4-amino-4-deoxy-L-arabinose transferase activity"/>
    <property type="evidence" value="ECO:0007669"/>
    <property type="project" value="UniProtKB-EC"/>
</dbReference>
<dbReference type="GO" id="GO:0000030">
    <property type="term" value="F:mannosyltransferase activity"/>
    <property type="evidence" value="ECO:0007669"/>
    <property type="project" value="InterPro"/>
</dbReference>
<dbReference type="GO" id="GO:0009245">
    <property type="term" value="P:lipid A biosynthetic process"/>
    <property type="evidence" value="ECO:0007669"/>
    <property type="project" value="UniProtKB-UniRule"/>
</dbReference>
<dbReference type="GO" id="GO:0009103">
    <property type="term" value="P:lipopolysaccharide biosynthetic process"/>
    <property type="evidence" value="ECO:0007669"/>
    <property type="project" value="UniProtKB-KW"/>
</dbReference>
<dbReference type="GO" id="GO:0006493">
    <property type="term" value="P:protein O-linked glycosylation"/>
    <property type="evidence" value="ECO:0007669"/>
    <property type="project" value="InterPro"/>
</dbReference>
<dbReference type="GO" id="GO:0010041">
    <property type="term" value="P:response to iron(III) ion"/>
    <property type="evidence" value="ECO:0007669"/>
    <property type="project" value="TreeGrafter"/>
</dbReference>
<dbReference type="HAMAP" id="MF_01165">
    <property type="entry name" value="ArnT_transfer"/>
    <property type="match status" value="1"/>
</dbReference>
<dbReference type="InterPro" id="IPR022839">
    <property type="entry name" value="ArnT_tfrase"/>
</dbReference>
<dbReference type="InterPro" id="IPR003342">
    <property type="entry name" value="Glyco_trans_39/83"/>
</dbReference>
<dbReference type="InterPro" id="IPR050297">
    <property type="entry name" value="LipidA_mod_glycosyltrf_83"/>
</dbReference>
<dbReference type="NCBIfam" id="NF009784">
    <property type="entry name" value="PRK13279.1"/>
    <property type="match status" value="1"/>
</dbReference>
<dbReference type="PANTHER" id="PTHR33908">
    <property type="entry name" value="MANNOSYLTRANSFERASE YKCB-RELATED"/>
    <property type="match status" value="1"/>
</dbReference>
<dbReference type="PANTHER" id="PTHR33908:SF3">
    <property type="entry name" value="UNDECAPRENYL PHOSPHATE-ALPHA-4-AMINO-4-DEOXY-L-ARABINOSE ARABINOSYL TRANSFERASE"/>
    <property type="match status" value="1"/>
</dbReference>
<dbReference type="Pfam" id="PF02366">
    <property type="entry name" value="PMT"/>
    <property type="match status" value="1"/>
</dbReference>
<accession>A4SQX1</accession>
<reference key="1">
    <citation type="journal article" date="2008" name="BMC Genomics">
        <title>The genome of Aeromonas salmonicida subsp. salmonicida A449: insights into the evolution of a fish pathogen.</title>
        <authorList>
            <person name="Reith M.E."/>
            <person name="Singh R.K."/>
            <person name="Curtis B."/>
            <person name="Boyd J.M."/>
            <person name="Bouevitch A."/>
            <person name="Kimball J."/>
            <person name="Munholland J."/>
            <person name="Murphy C."/>
            <person name="Sarty D."/>
            <person name="Williams J."/>
            <person name="Nash J.H."/>
            <person name="Johnson S.C."/>
            <person name="Brown L.L."/>
        </authorList>
    </citation>
    <scope>NUCLEOTIDE SEQUENCE [LARGE SCALE GENOMIC DNA]</scope>
    <source>
        <strain>A449</strain>
    </source>
</reference>
<evidence type="ECO:0000255" key="1">
    <source>
        <dbReference type="HAMAP-Rule" id="MF_01165"/>
    </source>
</evidence>